<name>PSTB_SYNC1</name>
<organism>
    <name type="scientific">Syntrophotalea carbinolica (strain DSM 2380 / NBRC 103641 / GraBd1)</name>
    <name type="common">Pelobacter carbinolicus</name>
    <dbReference type="NCBI Taxonomy" id="338963"/>
    <lineage>
        <taxon>Bacteria</taxon>
        <taxon>Pseudomonadati</taxon>
        <taxon>Thermodesulfobacteriota</taxon>
        <taxon>Desulfuromonadia</taxon>
        <taxon>Desulfuromonadales</taxon>
        <taxon>Syntrophotaleaceae</taxon>
        <taxon>Syntrophotalea</taxon>
    </lineage>
</organism>
<proteinExistence type="inferred from homology"/>
<reference key="1">
    <citation type="submission" date="2005-10" db="EMBL/GenBank/DDBJ databases">
        <title>Complete sequence of Pelobacter carbinolicus DSM 2380.</title>
        <authorList>
            <person name="Copeland A."/>
            <person name="Lucas S."/>
            <person name="Lapidus A."/>
            <person name="Barry K."/>
            <person name="Detter J.C."/>
            <person name="Glavina T."/>
            <person name="Hammon N."/>
            <person name="Israni S."/>
            <person name="Pitluck S."/>
            <person name="Chertkov O."/>
            <person name="Schmutz J."/>
            <person name="Larimer F."/>
            <person name="Land M."/>
            <person name="Kyrpides N."/>
            <person name="Ivanova N."/>
            <person name="Richardson P."/>
        </authorList>
    </citation>
    <scope>NUCLEOTIDE SEQUENCE [LARGE SCALE GENOMIC DNA]</scope>
    <source>
        <strain>DSM 2380 / NBRC 103641 / GraBd1</strain>
    </source>
</reference>
<feature type="chain" id="PRO_0000272489" description="Phosphate import ATP-binding protein PstB">
    <location>
        <begin position="1"/>
        <end position="260"/>
    </location>
</feature>
<feature type="domain" description="ABC transporter" evidence="1">
    <location>
        <begin position="14"/>
        <end position="255"/>
    </location>
</feature>
<feature type="binding site" evidence="1">
    <location>
        <begin position="46"/>
        <end position="53"/>
    </location>
    <ligand>
        <name>ATP</name>
        <dbReference type="ChEBI" id="CHEBI:30616"/>
    </ligand>
</feature>
<accession>Q3A6U0</accession>
<gene>
    <name evidence="1" type="primary">pstB</name>
    <name type="ordered locus">Pcar_0658</name>
</gene>
<dbReference type="EC" id="7.3.2.1" evidence="1"/>
<dbReference type="EMBL" id="CP000142">
    <property type="protein sequence ID" value="ABA87917.1"/>
    <property type="molecule type" value="Genomic_DNA"/>
</dbReference>
<dbReference type="RefSeq" id="WP_011340360.1">
    <property type="nucleotide sequence ID" value="NC_007498.2"/>
</dbReference>
<dbReference type="SMR" id="Q3A6U0"/>
<dbReference type="STRING" id="338963.Pcar_0658"/>
<dbReference type="KEGG" id="pca:Pcar_0658"/>
<dbReference type="eggNOG" id="COG1117">
    <property type="taxonomic scope" value="Bacteria"/>
</dbReference>
<dbReference type="HOGENOM" id="CLU_000604_1_22_7"/>
<dbReference type="OrthoDB" id="5429817at2"/>
<dbReference type="Proteomes" id="UP000002534">
    <property type="component" value="Chromosome"/>
</dbReference>
<dbReference type="GO" id="GO:0005886">
    <property type="term" value="C:plasma membrane"/>
    <property type="evidence" value="ECO:0007669"/>
    <property type="project" value="UniProtKB-SubCell"/>
</dbReference>
<dbReference type="GO" id="GO:0005524">
    <property type="term" value="F:ATP binding"/>
    <property type="evidence" value="ECO:0007669"/>
    <property type="project" value="UniProtKB-KW"/>
</dbReference>
<dbReference type="GO" id="GO:0016887">
    <property type="term" value="F:ATP hydrolysis activity"/>
    <property type="evidence" value="ECO:0007669"/>
    <property type="project" value="InterPro"/>
</dbReference>
<dbReference type="GO" id="GO:0015415">
    <property type="term" value="F:ATPase-coupled phosphate ion transmembrane transporter activity"/>
    <property type="evidence" value="ECO:0007669"/>
    <property type="project" value="UniProtKB-EC"/>
</dbReference>
<dbReference type="GO" id="GO:0035435">
    <property type="term" value="P:phosphate ion transmembrane transport"/>
    <property type="evidence" value="ECO:0007669"/>
    <property type="project" value="InterPro"/>
</dbReference>
<dbReference type="CDD" id="cd03260">
    <property type="entry name" value="ABC_PstB_phosphate_transporter"/>
    <property type="match status" value="1"/>
</dbReference>
<dbReference type="FunFam" id="3.40.50.300:FF:000132">
    <property type="entry name" value="Phosphate import ATP-binding protein PstB"/>
    <property type="match status" value="1"/>
</dbReference>
<dbReference type="Gene3D" id="3.40.50.300">
    <property type="entry name" value="P-loop containing nucleotide triphosphate hydrolases"/>
    <property type="match status" value="1"/>
</dbReference>
<dbReference type="InterPro" id="IPR003593">
    <property type="entry name" value="AAA+_ATPase"/>
</dbReference>
<dbReference type="InterPro" id="IPR003439">
    <property type="entry name" value="ABC_transporter-like_ATP-bd"/>
</dbReference>
<dbReference type="InterPro" id="IPR017871">
    <property type="entry name" value="ABC_transporter-like_CS"/>
</dbReference>
<dbReference type="InterPro" id="IPR027417">
    <property type="entry name" value="P-loop_NTPase"/>
</dbReference>
<dbReference type="InterPro" id="IPR005670">
    <property type="entry name" value="PstB-like"/>
</dbReference>
<dbReference type="NCBIfam" id="TIGR00972">
    <property type="entry name" value="3a0107s01c2"/>
    <property type="match status" value="1"/>
</dbReference>
<dbReference type="PANTHER" id="PTHR43423">
    <property type="entry name" value="ABC TRANSPORTER I FAMILY MEMBER 17"/>
    <property type="match status" value="1"/>
</dbReference>
<dbReference type="PANTHER" id="PTHR43423:SF1">
    <property type="entry name" value="ABC TRANSPORTER I FAMILY MEMBER 17"/>
    <property type="match status" value="1"/>
</dbReference>
<dbReference type="Pfam" id="PF00005">
    <property type="entry name" value="ABC_tran"/>
    <property type="match status" value="1"/>
</dbReference>
<dbReference type="SMART" id="SM00382">
    <property type="entry name" value="AAA"/>
    <property type="match status" value="1"/>
</dbReference>
<dbReference type="SUPFAM" id="SSF52540">
    <property type="entry name" value="P-loop containing nucleoside triphosphate hydrolases"/>
    <property type="match status" value="1"/>
</dbReference>
<dbReference type="PROSITE" id="PS00211">
    <property type="entry name" value="ABC_TRANSPORTER_1"/>
    <property type="match status" value="1"/>
</dbReference>
<dbReference type="PROSITE" id="PS50893">
    <property type="entry name" value="ABC_TRANSPORTER_2"/>
    <property type="match status" value="1"/>
</dbReference>
<dbReference type="PROSITE" id="PS51238">
    <property type="entry name" value="PSTB"/>
    <property type="match status" value="1"/>
</dbReference>
<comment type="function">
    <text evidence="1">Part of the ABC transporter complex PstSACB involved in phosphate import. Responsible for energy coupling to the transport system.</text>
</comment>
<comment type="catalytic activity">
    <reaction evidence="1">
        <text>phosphate(out) + ATP + H2O = ADP + 2 phosphate(in) + H(+)</text>
        <dbReference type="Rhea" id="RHEA:24440"/>
        <dbReference type="ChEBI" id="CHEBI:15377"/>
        <dbReference type="ChEBI" id="CHEBI:15378"/>
        <dbReference type="ChEBI" id="CHEBI:30616"/>
        <dbReference type="ChEBI" id="CHEBI:43474"/>
        <dbReference type="ChEBI" id="CHEBI:456216"/>
        <dbReference type="EC" id="7.3.2.1"/>
    </reaction>
</comment>
<comment type="subunit">
    <text evidence="1">The complex is composed of two ATP-binding proteins (PstB), two transmembrane proteins (PstC and PstA) and a solute-binding protein (PstS).</text>
</comment>
<comment type="subcellular location">
    <subcellularLocation>
        <location evidence="1">Cell inner membrane</location>
        <topology evidence="1">Peripheral membrane protein</topology>
    </subcellularLocation>
</comment>
<comment type="similarity">
    <text evidence="1">Belongs to the ABC transporter superfamily. Phosphate importer (TC 3.A.1.7) family.</text>
</comment>
<protein>
    <recommendedName>
        <fullName evidence="1">Phosphate import ATP-binding protein PstB</fullName>
        <ecNumber evidence="1">7.3.2.1</ecNumber>
    </recommendedName>
    <alternativeName>
        <fullName evidence="1">ABC phosphate transporter</fullName>
    </alternativeName>
    <alternativeName>
        <fullName evidence="1">Phosphate-transporting ATPase</fullName>
    </alternativeName>
</protein>
<evidence type="ECO:0000255" key="1">
    <source>
        <dbReference type="HAMAP-Rule" id="MF_01702"/>
    </source>
</evidence>
<sequence>MSETLSVAVTDPIVQVKNLAFYYGASKALHNISQDFPRNKVTALIGPSGCGKSTLLRCLNRMNDLVDGARVEGSILLDGTEVNTPAMDVIELRRRVGMVFQKSNPFPKSIYENVIYGLRIAGVRDKAVLDQAVEQSLRSAALWDEVKDRLHESALGMSGGQMQRLCIARAIAVNPEVVLMDEPCSALDPKSTARVEELISELREKYTIIIVTHNMQQAARVSDYTAFLFEGVLVEYGVTEDLFVKPRNKQTEDYITGRFG</sequence>
<keyword id="KW-0067">ATP-binding</keyword>
<keyword id="KW-0997">Cell inner membrane</keyword>
<keyword id="KW-1003">Cell membrane</keyword>
<keyword id="KW-0472">Membrane</keyword>
<keyword id="KW-0547">Nucleotide-binding</keyword>
<keyword id="KW-0592">Phosphate transport</keyword>
<keyword id="KW-1185">Reference proteome</keyword>
<keyword id="KW-1278">Translocase</keyword>
<keyword id="KW-0813">Transport</keyword>